<protein>
    <recommendedName>
        <fullName>Small integral membrane protein 14</fullName>
    </recommendedName>
</protein>
<name>SIM14_MOUSE</name>
<gene>
    <name type="primary">Smim14</name>
</gene>
<sequence>MAEGGFDPCECVCSHEHAMRRLINLLRQSQSYCTDTECLRELPGPSSDSGISITVILMAWMVIAMLLFLLRPPNLRGSSLPGKPSSPHSGQDPPAPPVD</sequence>
<keyword id="KW-0256">Endoplasmic reticulum</keyword>
<keyword id="KW-0472">Membrane</keyword>
<keyword id="KW-1185">Reference proteome</keyword>
<keyword id="KW-0812">Transmembrane</keyword>
<keyword id="KW-1133">Transmembrane helix</keyword>
<evidence type="ECO:0000250" key="1"/>
<evidence type="ECO:0000255" key="2"/>
<evidence type="ECO:0000256" key="3">
    <source>
        <dbReference type="SAM" id="MobiDB-lite"/>
    </source>
</evidence>
<evidence type="ECO:0000269" key="4">
    <source>
    </source>
</evidence>
<organism>
    <name type="scientific">Mus musculus</name>
    <name type="common">Mouse</name>
    <dbReference type="NCBI Taxonomy" id="10090"/>
    <lineage>
        <taxon>Eukaryota</taxon>
        <taxon>Metazoa</taxon>
        <taxon>Chordata</taxon>
        <taxon>Craniata</taxon>
        <taxon>Vertebrata</taxon>
        <taxon>Euteleostomi</taxon>
        <taxon>Mammalia</taxon>
        <taxon>Eutheria</taxon>
        <taxon>Euarchontoglires</taxon>
        <taxon>Glires</taxon>
        <taxon>Rodentia</taxon>
        <taxon>Myomorpha</taxon>
        <taxon>Muroidea</taxon>
        <taxon>Muridae</taxon>
        <taxon>Murinae</taxon>
        <taxon>Mus</taxon>
        <taxon>Mus</taxon>
    </lineage>
</organism>
<dbReference type="EMBL" id="AK003345">
    <property type="protein sequence ID" value="BAC25031.1"/>
    <property type="molecule type" value="mRNA"/>
</dbReference>
<dbReference type="EMBL" id="AK018994">
    <property type="protein sequence ID" value="BAC25573.1"/>
    <property type="molecule type" value="mRNA"/>
</dbReference>
<dbReference type="EMBL" id="AK044669">
    <property type="protein sequence ID" value="BAC32025.1"/>
    <property type="molecule type" value="mRNA"/>
</dbReference>
<dbReference type="EMBL" id="AK088833">
    <property type="protein sequence ID" value="BAC40601.1"/>
    <property type="molecule type" value="mRNA"/>
</dbReference>
<dbReference type="EMBL" id="AK164394">
    <property type="protein sequence ID" value="BAE37770.1"/>
    <property type="molecule type" value="mRNA"/>
</dbReference>
<dbReference type="EMBL" id="BC009097">
    <property type="protein sequence ID" value="AAH09097.1"/>
    <property type="molecule type" value="mRNA"/>
</dbReference>
<dbReference type="CCDS" id="CCDS19309.1"/>
<dbReference type="RefSeq" id="NP_001363900.1">
    <property type="nucleotide sequence ID" value="NM_001376971.1"/>
</dbReference>
<dbReference type="RefSeq" id="NP_001363901.1">
    <property type="nucleotide sequence ID" value="NM_001376972.1"/>
</dbReference>
<dbReference type="RefSeq" id="NP_001363902.1">
    <property type="nucleotide sequence ID" value="NM_001376973.1"/>
</dbReference>
<dbReference type="RefSeq" id="NP_001363903.1">
    <property type="nucleotide sequence ID" value="NM_001376974.1"/>
</dbReference>
<dbReference type="RefSeq" id="NP_001363904.1">
    <property type="nucleotide sequence ID" value="NM_001376975.1"/>
</dbReference>
<dbReference type="RefSeq" id="NP_001363905.1">
    <property type="nucleotide sequence ID" value="NM_001376976.1"/>
</dbReference>
<dbReference type="RefSeq" id="NP_001363906.1">
    <property type="nucleotide sequence ID" value="NM_001376977.1"/>
</dbReference>
<dbReference type="RefSeq" id="NP_001363907.1">
    <property type="nucleotide sequence ID" value="NM_001376978.1"/>
</dbReference>
<dbReference type="RefSeq" id="NP_001363908.1">
    <property type="nucleotide sequence ID" value="NM_001376979.1"/>
</dbReference>
<dbReference type="RefSeq" id="NP_598458.1">
    <property type="nucleotide sequence ID" value="NM_133697.4"/>
</dbReference>
<dbReference type="RefSeq" id="XP_006504146.1">
    <property type="nucleotide sequence ID" value="XM_006504083.2"/>
</dbReference>
<dbReference type="RefSeq" id="XP_006504147.1">
    <property type="nucleotide sequence ID" value="XM_006504084.3"/>
</dbReference>
<dbReference type="RefSeq" id="XP_006504148.1">
    <property type="nucleotide sequence ID" value="XM_006504085.3"/>
</dbReference>
<dbReference type="RefSeq" id="XP_006504149.1">
    <property type="nucleotide sequence ID" value="XM_006504086.3"/>
</dbReference>
<dbReference type="RefSeq" id="XP_006504150.1">
    <property type="nucleotide sequence ID" value="XM_006504087.3"/>
</dbReference>
<dbReference type="RefSeq" id="XP_006504151.1">
    <property type="nucleotide sequence ID" value="XM_006504088.3"/>
</dbReference>
<dbReference type="RefSeq" id="XP_006504152.1">
    <property type="nucleotide sequence ID" value="XM_006504089.2"/>
</dbReference>
<dbReference type="RefSeq" id="XP_036021351.1">
    <property type="nucleotide sequence ID" value="XM_036165458.1"/>
</dbReference>
<dbReference type="BioGRID" id="212922">
    <property type="interactions" value="1"/>
</dbReference>
<dbReference type="FunCoup" id="Q91VT8">
    <property type="interactions" value="1703"/>
</dbReference>
<dbReference type="STRING" id="10090.ENSMUSP00000122363"/>
<dbReference type="iPTMnet" id="Q91VT8"/>
<dbReference type="PhosphoSitePlus" id="Q91VT8"/>
<dbReference type="PaxDb" id="10090-ENSMUSP00000122363"/>
<dbReference type="ProteomicsDB" id="257178"/>
<dbReference type="Antibodypedia" id="54789">
    <property type="antibodies" value="103 antibodies from 13 providers"/>
</dbReference>
<dbReference type="Ensembl" id="ENSMUST00000121661.8">
    <property type="protein sequence ID" value="ENSMUSP00000113456.2"/>
    <property type="gene ID" value="ENSMUSG00000037822.13"/>
</dbReference>
<dbReference type="Ensembl" id="ENSMUST00000139122.8">
    <property type="protein sequence ID" value="ENSMUSP00000122363.2"/>
    <property type="gene ID" value="ENSMUSG00000037822.13"/>
</dbReference>
<dbReference type="GeneID" id="68552"/>
<dbReference type="KEGG" id="mmu:68552"/>
<dbReference type="UCSC" id="uc008xnt.1">
    <property type="organism name" value="mouse"/>
</dbReference>
<dbReference type="AGR" id="MGI:1915802"/>
<dbReference type="CTD" id="201895"/>
<dbReference type="MGI" id="MGI:1915802">
    <property type="gene designation" value="Smim14"/>
</dbReference>
<dbReference type="VEuPathDB" id="HostDB:ENSMUSG00000037822"/>
<dbReference type="eggNOG" id="ENOG502S7T0">
    <property type="taxonomic scope" value="Eukaryota"/>
</dbReference>
<dbReference type="GeneTree" id="ENSGT00390000018294"/>
<dbReference type="HOGENOM" id="CLU_152284_0_0_1"/>
<dbReference type="InParanoid" id="Q91VT8"/>
<dbReference type="OMA" id="ACTDTEC"/>
<dbReference type="OrthoDB" id="10054061at2759"/>
<dbReference type="PhylomeDB" id="Q91VT8"/>
<dbReference type="TreeFam" id="TF314023"/>
<dbReference type="BioGRID-ORCS" id="68552">
    <property type="hits" value="1 hit in 76 CRISPR screens"/>
</dbReference>
<dbReference type="ChiTaRS" id="Smim14">
    <property type="organism name" value="mouse"/>
</dbReference>
<dbReference type="PRO" id="PR:Q91VT8"/>
<dbReference type="Proteomes" id="UP000000589">
    <property type="component" value="Chromosome 5"/>
</dbReference>
<dbReference type="RNAct" id="Q91VT8">
    <property type="molecule type" value="protein"/>
</dbReference>
<dbReference type="Bgee" id="ENSMUSG00000037822">
    <property type="expression patterns" value="Expressed in parotid gland and 280 other cell types or tissues"/>
</dbReference>
<dbReference type="ExpressionAtlas" id="Q91VT8">
    <property type="expression patterns" value="baseline and differential"/>
</dbReference>
<dbReference type="GO" id="GO:0005783">
    <property type="term" value="C:endoplasmic reticulum"/>
    <property type="evidence" value="ECO:0000250"/>
    <property type="project" value="UniProtKB"/>
</dbReference>
<dbReference type="GO" id="GO:0005789">
    <property type="term" value="C:endoplasmic reticulum membrane"/>
    <property type="evidence" value="ECO:0007669"/>
    <property type="project" value="UniProtKB-SubCell"/>
</dbReference>
<dbReference type="GO" id="GO:0001835">
    <property type="term" value="P:blastocyst hatching"/>
    <property type="evidence" value="ECO:0000315"/>
    <property type="project" value="MGI"/>
</dbReference>
<dbReference type="InterPro" id="IPR020309">
    <property type="entry name" value="Uncharacterised_CD034/YQF4"/>
</dbReference>
<dbReference type="PANTHER" id="PTHR31019">
    <property type="entry name" value="SMALL INTEGRAL MEMBRANE PROTEIN 14"/>
    <property type="match status" value="1"/>
</dbReference>
<dbReference type="PANTHER" id="PTHR31019:SF1">
    <property type="entry name" value="SMALL INTEGRAL MEMBRANE PROTEIN 14"/>
    <property type="match status" value="1"/>
</dbReference>
<dbReference type="Pfam" id="PF11027">
    <property type="entry name" value="DUF2615"/>
    <property type="match status" value="1"/>
</dbReference>
<accession>Q91VT8</accession>
<feature type="chain" id="PRO_0000268817" description="Small integral membrane protein 14">
    <location>
        <begin position="1"/>
        <end position="99"/>
    </location>
</feature>
<feature type="topological domain" description="Lumenal" evidence="2">
    <location>
        <begin position="1"/>
        <end position="49"/>
    </location>
</feature>
<feature type="transmembrane region" description="Helical" evidence="2">
    <location>
        <begin position="50"/>
        <end position="70"/>
    </location>
</feature>
<feature type="topological domain" description="Cytoplasmic" evidence="2">
    <location>
        <begin position="71"/>
        <end position="99"/>
    </location>
</feature>
<feature type="region of interest" description="Disordered" evidence="3">
    <location>
        <begin position="77"/>
        <end position="99"/>
    </location>
</feature>
<proteinExistence type="evidence at protein level"/>
<comment type="subcellular location">
    <subcellularLocation>
        <location evidence="1">Endoplasmic reticulum membrane</location>
        <topology evidence="1">Single-pass membrane protein</topology>
    </subcellularLocation>
</comment>
<comment type="tissue specificity">
    <text evidence="4">Ubiquitously expressed.</text>
</comment>
<reference key="1">
    <citation type="journal article" date="2005" name="Science">
        <title>The transcriptional landscape of the mammalian genome.</title>
        <authorList>
            <person name="Carninci P."/>
            <person name="Kasukawa T."/>
            <person name="Katayama S."/>
            <person name="Gough J."/>
            <person name="Frith M.C."/>
            <person name="Maeda N."/>
            <person name="Oyama R."/>
            <person name="Ravasi T."/>
            <person name="Lenhard B."/>
            <person name="Wells C."/>
            <person name="Kodzius R."/>
            <person name="Shimokawa K."/>
            <person name="Bajic V.B."/>
            <person name="Brenner S.E."/>
            <person name="Batalov S."/>
            <person name="Forrest A.R."/>
            <person name="Zavolan M."/>
            <person name="Davis M.J."/>
            <person name="Wilming L.G."/>
            <person name="Aidinis V."/>
            <person name="Allen J.E."/>
            <person name="Ambesi-Impiombato A."/>
            <person name="Apweiler R."/>
            <person name="Aturaliya R.N."/>
            <person name="Bailey T.L."/>
            <person name="Bansal M."/>
            <person name="Baxter L."/>
            <person name="Beisel K.W."/>
            <person name="Bersano T."/>
            <person name="Bono H."/>
            <person name="Chalk A.M."/>
            <person name="Chiu K.P."/>
            <person name="Choudhary V."/>
            <person name="Christoffels A."/>
            <person name="Clutterbuck D.R."/>
            <person name="Crowe M.L."/>
            <person name="Dalla E."/>
            <person name="Dalrymple B.P."/>
            <person name="de Bono B."/>
            <person name="Della Gatta G."/>
            <person name="di Bernardo D."/>
            <person name="Down T."/>
            <person name="Engstrom P."/>
            <person name="Fagiolini M."/>
            <person name="Faulkner G."/>
            <person name="Fletcher C.F."/>
            <person name="Fukushima T."/>
            <person name="Furuno M."/>
            <person name="Futaki S."/>
            <person name="Gariboldi M."/>
            <person name="Georgii-Hemming P."/>
            <person name="Gingeras T.R."/>
            <person name="Gojobori T."/>
            <person name="Green R.E."/>
            <person name="Gustincich S."/>
            <person name="Harbers M."/>
            <person name="Hayashi Y."/>
            <person name="Hensch T.K."/>
            <person name="Hirokawa N."/>
            <person name="Hill D."/>
            <person name="Huminiecki L."/>
            <person name="Iacono M."/>
            <person name="Ikeo K."/>
            <person name="Iwama A."/>
            <person name="Ishikawa T."/>
            <person name="Jakt M."/>
            <person name="Kanapin A."/>
            <person name="Katoh M."/>
            <person name="Kawasawa Y."/>
            <person name="Kelso J."/>
            <person name="Kitamura H."/>
            <person name="Kitano H."/>
            <person name="Kollias G."/>
            <person name="Krishnan S.P."/>
            <person name="Kruger A."/>
            <person name="Kummerfeld S.K."/>
            <person name="Kurochkin I.V."/>
            <person name="Lareau L.F."/>
            <person name="Lazarevic D."/>
            <person name="Lipovich L."/>
            <person name="Liu J."/>
            <person name="Liuni S."/>
            <person name="McWilliam S."/>
            <person name="Madan Babu M."/>
            <person name="Madera M."/>
            <person name="Marchionni L."/>
            <person name="Matsuda H."/>
            <person name="Matsuzawa S."/>
            <person name="Miki H."/>
            <person name="Mignone F."/>
            <person name="Miyake S."/>
            <person name="Morris K."/>
            <person name="Mottagui-Tabar S."/>
            <person name="Mulder N."/>
            <person name="Nakano N."/>
            <person name="Nakauchi H."/>
            <person name="Ng P."/>
            <person name="Nilsson R."/>
            <person name="Nishiguchi S."/>
            <person name="Nishikawa S."/>
            <person name="Nori F."/>
            <person name="Ohara O."/>
            <person name="Okazaki Y."/>
            <person name="Orlando V."/>
            <person name="Pang K.C."/>
            <person name="Pavan W.J."/>
            <person name="Pavesi G."/>
            <person name="Pesole G."/>
            <person name="Petrovsky N."/>
            <person name="Piazza S."/>
            <person name="Reed J."/>
            <person name="Reid J.F."/>
            <person name="Ring B.Z."/>
            <person name="Ringwald M."/>
            <person name="Rost B."/>
            <person name="Ruan Y."/>
            <person name="Salzberg S.L."/>
            <person name="Sandelin A."/>
            <person name="Schneider C."/>
            <person name="Schoenbach C."/>
            <person name="Sekiguchi K."/>
            <person name="Semple C.A."/>
            <person name="Seno S."/>
            <person name="Sessa L."/>
            <person name="Sheng Y."/>
            <person name="Shibata Y."/>
            <person name="Shimada H."/>
            <person name="Shimada K."/>
            <person name="Silva D."/>
            <person name="Sinclair B."/>
            <person name="Sperling S."/>
            <person name="Stupka E."/>
            <person name="Sugiura K."/>
            <person name="Sultana R."/>
            <person name="Takenaka Y."/>
            <person name="Taki K."/>
            <person name="Tammoja K."/>
            <person name="Tan S.L."/>
            <person name="Tang S."/>
            <person name="Taylor M.S."/>
            <person name="Tegner J."/>
            <person name="Teichmann S.A."/>
            <person name="Ueda H.R."/>
            <person name="van Nimwegen E."/>
            <person name="Verardo R."/>
            <person name="Wei C.L."/>
            <person name="Yagi K."/>
            <person name="Yamanishi H."/>
            <person name="Zabarovsky E."/>
            <person name="Zhu S."/>
            <person name="Zimmer A."/>
            <person name="Hide W."/>
            <person name="Bult C."/>
            <person name="Grimmond S.M."/>
            <person name="Teasdale R.D."/>
            <person name="Liu E.T."/>
            <person name="Brusic V."/>
            <person name="Quackenbush J."/>
            <person name="Wahlestedt C."/>
            <person name="Mattick J.S."/>
            <person name="Hume D.A."/>
            <person name="Kai C."/>
            <person name="Sasaki D."/>
            <person name="Tomaru Y."/>
            <person name="Fukuda S."/>
            <person name="Kanamori-Katayama M."/>
            <person name="Suzuki M."/>
            <person name="Aoki J."/>
            <person name="Arakawa T."/>
            <person name="Iida J."/>
            <person name="Imamura K."/>
            <person name="Itoh M."/>
            <person name="Kato T."/>
            <person name="Kawaji H."/>
            <person name="Kawagashira N."/>
            <person name="Kawashima T."/>
            <person name="Kojima M."/>
            <person name="Kondo S."/>
            <person name="Konno H."/>
            <person name="Nakano K."/>
            <person name="Ninomiya N."/>
            <person name="Nishio T."/>
            <person name="Okada M."/>
            <person name="Plessy C."/>
            <person name="Shibata K."/>
            <person name="Shiraki T."/>
            <person name="Suzuki S."/>
            <person name="Tagami M."/>
            <person name="Waki K."/>
            <person name="Watahiki A."/>
            <person name="Okamura-Oho Y."/>
            <person name="Suzuki H."/>
            <person name="Kawai J."/>
            <person name="Hayashizaki Y."/>
        </authorList>
    </citation>
    <scope>NUCLEOTIDE SEQUENCE [LARGE SCALE MRNA]</scope>
    <source>
        <strain>C57BL/6J</strain>
        <strain>NOD</strain>
        <tissue>Embryo</tissue>
        <tissue>Eye</tissue>
        <tissue>Retina</tissue>
        <tissue>Testis</tissue>
        <tissue>Thymus</tissue>
    </source>
</reference>
<reference key="2">
    <citation type="journal article" date="2004" name="Genome Res.">
        <title>The status, quality, and expansion of the NIH full-length cDNA project: the Mammalian Gene Collection (MGC).</title>
        <authorList>
            <consortium name="The MGC Project Team"/>
        </authorList>
    </citation>
    <scope>NUCLEOTIDE SEQUENCE [LARGE SCALE MRNA]</scope>
    <source>
        <strain>FVB/N</strain>
        <tissue>Mammary tumor</tissue>
    </source>
</reference>
<reference key="3">
    <citation type="journal article" date="2010" name="Cell">
        <title>A tissue-specific atlas of mouse protein phosphorylation and expression.</title>
        <authorList>
            <person name="Huttlin E.L."/>
            <person name="Jedrychowski M.P."/>
            <person name="Elias J.E."/>
            <person name="Goswami T."/>
            <person name="Rad R."/>
            <person name="Beausoleil S.A."/>
            <person name="Villen J."/>
            <person name="Haas W."/>
            <person name="Sowa M.E."/>
            <person name="Gygi S.P."/>
        </authorList>
    </citation>
    <scope>IDENTIFICATION BY MASS SPECTROMETRY [LARGE SCALE ANALYSIS]</scope>
    <source>
        <tissue>Testis</tissue>
    </source>
</reference>
<reference key="4">
    <citation type="journal article" date="2014" name="BMB Rep.">
        <title>Characterization of the cellular localization of C4orf34 as a novel endoplasmic reticulum resident protein.</title>
        <authorList>
            <person name="Jun M.H."/>
            <person name="Jun Y.W."/>
            <person name="Kim K.H."/>
            <person name="Lee J.A."/>
            <person name="Jang D.J."/>
        </authorList>
    </citation>
    <scope>TISSUE SPECIFICITY</scope>
</reference>